<feature type="initiator methionine" description="Removed" evidence="24">
    <location>
        <position position="1"/>
    </location>
</feature>
<feature type="chain" id="PRO_0000431440" description="Protein EDS1">
    <location>
        <begin position="2"/>
        <end position="623"/>
    </location>
</feature>
<feature type="coiled-coil region" evidence="2">
    <location>
        <begin position="358"/>
        <end position="383"/>
    </location>
</feature>
<feature type="active site" description="Nucleophile" evidence="1">
    <location>
        <position position="123"/>
    </location>
</feature>
<feature type="active site" description="Charge relay system" evidence="1">
    <location>
        <position position="187"/>
    </location>
</feature>
<feature type="active site" description="Charge relay system" evidence="1">
    <location>
        <position position="317"/>
    </location>
</feature>
<feature type="modified residue" description="N-acetylalanine" evidence="24">
    <location>
        <position position="2"/>
    </location>
</feature>
<feature type="splice variant" id="VSP_057262" description="In isoform 2.">
    <location>
        <begin position="1"/>
        <end position="108"/>
    </location>
</feature>
<feature type="mutagenesis site" description="Loss of interaction with PAD4, but no effect on dimerization or interaction with SAG101." evidence="8">
    <original>L</original>
    <variation>P</variation>
    <location>
        <position position="262"/>
    </location>
</feature>
<feature type="mutagenesis site" description="In eds1-1; loss of interaction with PAD4 and SAG101, but no effect on dimerization." evidence="4 8">
    <original>E</original>
    <variation>K</variation>
    <location>
        <position position="466"/>
    </location>
</feature>
<feature type="helix" evidence="25">
    <location>
        <begin position="3"/>
        <end position="7"/>
    </location>
</feature>
<feature type="helix" evidence="25">
    <location>
        <begin position="11"/>
        <end position="26"/>
    </location>
</feature>
<feature type="strand" evidence="25">
    <location>
        <begin position="27"/>
        <end position="35"/>
    </location>
</feature>
<feature type="strand" evidence="25">
    <location>
        <begin position="38"/>
        <end position="43"/>
    </location>
</feature>
<feature type="helix" evidence="25">
    <location>
        <begin position="49"/>
        <end position="51"/>
    </location>
</feature>
<feature type="strand" evidence="25">
    <location>
        <begin position="59"/>
        <end position="65"/>
    </location>
</feature>
<feature type="turn" evidence="25">
    <location>
        <begin position="68"/>
        <end position="70"/>
    </location>
</feature>
<feature type="turn" evidence="25">
    <location>
        <begin position="77"/>
        <end position="79"/>
    </location>
</feature>
<feature type="strand" evidence="25">
    <location>
        <begin position="84"/>
        <end position="86"/>
    </location>
</feature>
<feature type="helix" evidence="25">
    <location>
        <begin position="87"/>
        <end position="97"/>
    </location>
</feature>
<feature type="helix" evidence="26">
    <location>
        <begin position="99"/>
        <end position="101"/>
    </location>
</feature>
<feature type="helix" evidence="25">
    <location>
        <begin position="103"/>
        <end position="112"/>
    </location>
</feature>
<feature type="strand" evidence="25">
    <location>
        <begin position="116"/>
        <end position="122"/>
    </location>
</feature>
<feature type="helix" evidence="25">
    <location>
        <begin position="124"/>
        <end position="139"/>
    </location>
</feature>
<feature type="helix" evidence="25">
    <location>
        <begin position="141"/>
        <end position="143"/>
    </location>
</feature>
<feature type="helix" evidence="25">
    <location>
        <begin position="147"/>
        <end position="149"/>
    </location>
</feature>
<feature type="strand" evidence="25">
    <location>
        <begin position="152"/>
        <end position="157"/>
    </location>
</feature>
<feature type="helix" evidence="25">
    <location>
        <begin position="164"/>
        <end position="172"/>
    </location>
</feature>
<feature type="helix" evidence="25">
    <location>
        <begin position="176"/>
        <end position="178"/>
    </location>
</feature>
<feature type="strand" evidence="25">
    <location>
        <begin position="179"/>
        <end position="184"/>
    </location>
</feature>
<feature type="helix" evidence="25">
    <location>
        <begin position="189"/>
        <end position="192"/>
    </location>
</feature>
<feature type="helix" evidence="25">
    <location>
        <begin position="197"/>
        <end position="200"/>
    </location>
</feature>
<feature type="turn" evidence="25">
    <location>
        <begin position="201"/>
        <end position="203"/>
    </location>
</feature>
<feature type="helix" evidence="25">
    <location>
        <begin position="204"/>
        <end position="211"/>
    </location>
</feature>
<feature type="strand" evidence="25">
    <location>
        <begin position="212"/>
        <end position="214"/>
    </location>
</feature>
<feature type="helix" evidence="25">
    <location>
        <begin position="222"/>
        <end position="247"/>
    </location>
</feature>
<feature type="turn" evidence="25">
    <location>
        <begin position="248"/>
        <end position="251"/>
    </location>
</feature>
<feature type="helix" evidence="25">
    <location>
        <begin position="252"/>
        <end position="259"/>
    </location>
</feature>
<feature type="strand" evidence="25">
    <location>
        <begin position="271"/>
        <end position="276"/>
    </location>
</feature>
<feature type="strand" evidence="25">
    <location>
        <begin position="278"/>
        <end position="284"/>
    </location>
</feature>
<feature type="helix" evidence="25">
    <location>
        <begin position="287"/>
        <end position="296"/>
    </location>
</feature>
<feature type="strand" evidence="26">
    <location>
        <begin position="297"/>
        <end position="299"/>
    </location>
</feature>
<feature type="strand" evidence="25">
    <location>
        <begin position="300"/>
        <end position="302"/>
    </location>
</feature>
<feature type="helix" evidence="25">
    <location>
        <begin position="303"/>
        <end position="315"/>
    </location>
</feature>
<feature type="helix" evidence="25">
    <location>
        <begin position="316"/>
        <end position="318"/>
    </location>
</feature>
<feature type="helix" evidence="25">
    <location>
        <begin position="320"/>
        <end position="326"/>
    </location>
</feature>
<feature type="helix" evidence="25">
    <location>
        <begin position="327"/>
        <end position="329"/>
    </location>
</feature>
<feature type="strand" evidence="25">
    <location>
        <begin position="330"/>
        <end position="334"/>
    </location>
</feature>
<feature type="helix" evidence="25">
    <location>
        <begin position="335"/>
        <end position="337"/>
    </location>
</feature>
<feature type="helix" evidence="25">
    <location>
        <begin position="342"/>
        <end position="347"/>
    </location>
</feature>
<feature type="helix" evidence="25">
    <location>
        <begin position="352"/>
        <end position="380"/>
    </location>
</feature>
<feature type="helix" evidence="25">
    <location>
        <begin position="382"/>
        <end position="393"/>
    </location>
</feature>
<feature type="helix" evidence="25">
    <location>
        <begin position="395"/>
        <end position="401"/>
    </location>
</feature>
<feature type="helix" evidence="25">
    <location>
        <begin position="406"/>
        <end position="412"/>
    </location>
</feature>
<feature type="helix" evidence="25">
    <location>
        <begin position="416"/>
        <end position="440"/>
    </location>
</feature>
<feature type="helix" evidence="25">
    <location>
        <begin position="446"/>
        <end position="450"/>
    </location>
</feature>
<feature type="helix" evidence="25">
    <location>
        <begin position="452"/>
        <end position="475"/>
    </location>
</feature>
<feature type="turn" evidence="25">
    <location>
        <begin position="476"/>
        <end position="478"/>
    </location>
</feature>
<feature type="helix" evidence="25">
    <location>
        <begin position="479"/>
        <end position="482"/>
    </location>
</feature>
<feature type="helix" evidence="25">
    <location>
        <begin position="485"/>
        <end position="488"/>
    </location>
</feature>
<feature type="helix" evidence="25">
    <location>
        <begin position="492"/>
        <end position="506"/>
    </location>
</feature>
<feature type="helix" evidence="25">
    <location>
        <begin position="507"/>
        <end position="509"/>
    </location>
</feature>
<feature type="helix" evidence="25">
    <location>
        <begin position="513"/>
        <end position="523"/>
    </location>
</feature>
<feature type="helix" evidence="25">
    <location>
        <begin position="530"/>
        <end position="536"/>
    </location>
</feature>
<feature type="turn" evidence="25">
    <location>
        <begin position="537"/>
        <end position="539"/>
    </location>
</feature>
<feature type="helix" evidence="25">
    <location>
        <begin position="541"/>
        <end position="543"/>
    </location>
</feature>
<feature type="helix" evidence="25">
    <location>
        <begin position="545"/>
        <end position="547"/>
    </location>
</feature>
<feature type="helix" evidence="25">
    <location>
        <begin position="548"/>
        <end position="555"/>
    </location>
</feature>
<feature type="strand" evidence="27">
    <location>
        <begin position="556"/>
        <end position="558"/>
    </location>
</feature>
<feature type="helix" evidence="25">
    <location>
        <begin position="560"/>
        <end position="579"/>
    </location>
</feature>
<feature type="strand" evidence="26">
    <location>
        <begin position="581"/>
        <end position="583"/>
    </location>
</feature>
<feature type="helix" evidence="25">
    <location>
        <begin position="585"/>
        <end position="588"/>
    </location>
</feature>
<feature type="strand" evidence="26">
    <location>
        <begin position="590"/>
        <end position="592"/>
    </location>
</feature>
<feature type="helix" evidence="25">
    <location>
        <begin position="594"/>
        <end position="599"/>
    </location>
</feature>
<feature type="helix" evidence="25">
    <location>
        <begin position="604"/>
        <end position="609"/>
    </location>
</feature>
<feature type="helix" evidence="25">
    <location>
        <begin position="613"/>
        <end position="615"/>
    </location>
</feature>
<organism evidence="23">
    <name type="scientific">Arabidopsis thaliana</name>
    <name type="common">Mouse-ear cress</name>
    <dbReference type="NCBI Taxonomy" id="3702"/>
    <lineage>
        <taxon>Eukaryota</taxon>
        <taxon>Viridiplantae</taxon>
        <taxon>Streptophyta</taxon>
        <taxon>Embryophyta</taxon>
        <taxon>Tracheophyta</taxon>
        <taxon>Spermatophyta</taxon>
        <taxon>Magnoliopsida</taxon>
        <taxon>eudicotyledons</taxon>
        <taxon>Gunneridae</taxon>
        <taxon>Pentapetalae</taxon>
        <taxon>rosids</taxon>
        <taxon>malvids</taxon>
        <taxon>Brassicales</taxon>
        <taxon>Brassicaceae</taxon>
        <taxon>Camelineae</taxon>
        <taxon>Arabidopsis</taxon>
    </lineage>
</organism>
<reference key="1">
    <citation type="journal article" date="1999" name="Proc. Natl. Acad. Sci. U.S.A.">
        <title>EDS1, an essential component of R gene-mediated disease resistance in Arabidopsis has homology to eukaryotic lipases.</title>
        <authorList>
            <person name="Falk A."/>
            <person name="Feys B.J."/>
            <person name="Frost L.N."/>
            <person name="Jones J.D."/>
            <person name="Daniels M.J."/>
            <person name="Parker J.E."/>
        </authorList>
    </citation>
    <scope>NUCLEOTIDE SEQUENCE [GENOMIC DNA / MRNA] (ISOFORM 1)</scope>
    <scope>FUNCTION</scope>
    <scope>INDUCTION BY PATHOGEN AND SALICYLIC ACID</scope>
    <source>
        <strain>cv. Columbia</strain>
    </source>
</reference>
<reference key="2">
    <citation type="journal article" date="2009" name="Genetics">
        <title>Arabidopsis thaliana genes encoding defense signaling and recognition proteins exhibit contrasting evolutionary dynamics.</title>
        <authorList>
            <person name="Caldwell K.S."/>
            <person name="Michelmore R.W."/>
        </authorList>
    </citation>
    <scope>NUCLEOTIDE SEQUENCE [GENOMIC DNA]</scope>
    <source>
        <strain>cv. Columbia</strain>
        <strain>cv. Gu-0</strain>
        <strain>cv. Wei-0</strain>
    </source>
</reference>
<reference key="3">
    <citation type="journal article" date="2000" name="Nature">
        <title>Sequence and analysis of chromosome 3 of the plant Arabidopsis thaliana.</title>
        <authorList>
            <person name="Salanoubat M."/>
            <person name="Lemcke K."/>
            <person name="Rieger M."/>
            <person name="Ansorge W."/>
            <person name="Unseld M."/>
            <person name="Fartmann B."/>
            <person name="Valle G."/>
            <person name="Bloecker H."/>
            <person name="Perez-Alonso M."/>
            <person name="Obermaier B."/>
            <person name="Delseny M."/>
            <person name="Boutry M."/>
            <person name="Grivell L.A."/>
            <person name="Mache R."/>
            <person name="Puigdomenech P."/>
            <person name="De Simone V."/>
            <person name="Choisne N."/>
            <person name="Artiguenave F."/>
            <person name="Robert C."/>
            <person name="Brottier P."/>
            <person name="Wincker P."/>
            <person name="Cattolico L."/>
            <person name="Weissenbach J."/>
            <person name="Saurin W."/>
            <person name="Quetier F."/>
            <person name="Schaefer M."/>
            <person name="Mueller-Auer S."/>
            <person name="Gabel C."/>
            <person name="Fuchs M."/>
            <person name="Benes V."/>
            <person name="Wurmbach E."/>
            <person name="Drzonek H."/>
            <person name="Erfle H."/>
            <person name="Jordan N."/>
            <person name="Bangert S."/>
            <person name="Wiedelmann R."/>
            <person name="Kranz H."/>
            <person name="Voss H."/>
            <person name="Holland R."/>
            <person name="Brandt P."/>
            <person name="Nyakatura G."/>
            <person name="Vezzi A."/>
            <person name="D'Angelo M."/>
            <person name="Pallavicini A."/>
            <person name="Toppo S."/>
            <person name="Simionati B."/>
            <person name="Conrad A."/>
            <person name="Hornischer K."/>
            <person name="Kauer G."/>
            <person name="Loehnert T.-H."/>
            <person name="Nordsiek G."/>
            <person name="Reichelt J."/>
            <person name="Scharfe M."/>
            <person name="Schoen O."/>
            <person name="Bargues M."/>
            <person name="Terol J."/>
            <person name="Climent J."/>
            <person name="Navarro P."/>
            <person name="Collado C."/>
            <person name="Perez-Perez A."/>
            <person name="Ottenwaelder B."/>
            <person name="Duchemin D."/>
            <person name="Cooke R."/>
            <person name="Laudie M."/>
            <person name="Berger-Llauro C."/>
            <person name="Purnelle B."/>
            <person name="Masuy D."/>
            <person name="de Haan M."/>
            <person name="Maarse A.C."/>
            <person name="Alcaraz J.-P."/>
            <person name="Cottet A."/>
            <person name="Casacuberta E."/>
            <person name="Monfort A."/>
            <person name="Argiriou A."/>
            <person name="Flores M."/>
            <person name="Liguori R."/>
            <person name="Vitale D."/>
            <person name="Mannhaupt G."/>
            <person name="Haase D."/>
            <person name="Schoof H."/>
            <person name="Rudd S."/>
            <person name="Zaccaria P."/>
            <person name="Mewes H.-W."/>
            <person name="Mayer K.F.X."/>
            <person name="Kaul S."/>
            <person name="Town C.D."/>
            <person name="Koo H.L."/>
            <person name="Tallon L.J."/>
            <person name="Jenkins J."/>
            <person name="Rooney T."/>
            <person name="Rizzo M."/>
            <person name="Walts A."/>
            <person name="Utterback T."/>
            <person name="Fujii C.Y."/>
            <person name="Shea T.P."/>
            <person name="Creasy T.H."/>
            <person name="Haas B."/>
            <person name="Maiti R."/>
            <person name="Wu D."/>
            <person name="Peterson J."/>
            <person name="Van Aken S."/>
            <person name="Pai G."/>
            <person name="Militscher J."/>
            <person name="Sellers P."/>
            <person name="Gill J.E."/>
            <person name="Feldblyum T.V."/>
            <person name="Preuss D."/>
            <person name="Lin X."/>
            <person name="Nierman W.C."/>
            <person name="Salzberg S.L."/>
            <person name="White O."/>
            <person name="Venter J.C."/>
            <person name="Fraser C.M."/>
            <person name="Kaneko T."/>
            <person name="Nakamura Y."/>
            <person name="Sato S."/>
            <person name="Kato T."/>
            <person name="Asamizu E."/>
            <person name="Sasamoto S."/>
            <person name="Kimura T."/>
            <person name="Idesawa K."/>
            <person name="Kawashima K."/>
            <person name="Kishida Y."/>
            <person name="Kiyokawa C."/>
            <person name="Kohara M."/>
            <person name="Matsumoto M."/>
            <person name="Matsuno A."/>
            <person name="Muraki A."/>
            <person name="Nakayama S."/>
            <person name="Nakazaki N."/>
            <person name="Shinpo S."/>
            <person name="Takeuchi C."/>
            <person name="Wada T."/>
            <person name="Watanabe A."/>
            <person name="Yamada M."/>
            <person name="Yasuda M."/>
            <person name="Tabata S."/>
        </authorList>
    </citation>
    <scope>NUCLEOTIDE SEQUENCE [LARGE SCALE GENOMIC DNA]</scope>
    <source>
        <strain>cv. Columbia</strain>
    </source>
</reference>
<reference key="4">
    <citation type="journal article" date="2017" name="Plant J.">
        <title>Araport11: a complete reannotation of the Arabidopsis thaliana reference genome.</title>
        <authorList>
            <person name="Cheng C.Y."/>
            <person name="Krishnakumar V."/>
            <person name="Chan A.P."/>
            <person name="Thibaud-Nissen F."/>
            <person name="Schobel S."/>
            <person name="Town C.D."/>
        </authorList>
    </citation>
    <scope>GENOME REANNOTATION</scope>
    <source>
        <strain>cv. Columbia</strain>
    </source>
</reference>
<reference key="5">
    <citation type="journal article" date="2003" name="Science">
        <title>Empirical analysis of transcriptional activity in the Arabidopsis genome.</title>
        <authorList>
            <person name="Yamada K."/>
            <person name="Lim J."/>
            <person name="Dale J.M."/>
            <person name="Chen H."/>
            <person name="Shinn P."/>
            <person name="Palm C.J."/>
            <person name="Southwick A.M."/>
            <person name="Wu H.C."/>
            <person name="Kim C.J."/>
            <person name="Nguyen M."/>
            <person name="Pham P.K."/>
            <person name="Cheuk R.F."/>
            <person name="Karlin-Newmann G."/>
            <person name="Liu S.X."/>
            <person name="Lam B."/>
            <person name="Sakano H."/>
            <person name="Wu T."/>
            <person name="Yu G."/>
            <person name="Miranda M."/>
            <person name="Quach H.L."/>
            <person name="Tripp M."/>
            <person name="Chang C.H."/>
            <person name="Lee J.M."/>
            <person name="Toriumi M.J."/>
            <person name="Chan M.M."/>
            <person name="Tang C.C."/>
            <person name="Onodera C.S."/>
            <person name="Deng J.M."/>
            <person name="Akiyama K."/>
            <person name="Ansari Y."/>
            <person name="Arakawa T."/>
            <person name="Banh J."/>
            <person name="Banno F."/>
            <person name="Bowser L."/>
            <person name="Brooks S.Y."/>
            <person name="Carninci P."/>
            <person name="Chao Q."/>
            <person name="Choy N."/>
            <person name="Enju A."/>
            <person name="Goldsmith A.D."/>
            <person name="Gurjal M."/>
            <person name="Hansen N.F."/>
            <person name="Hayashizaki Y."/>
            <person name="Johnson-Hopson C."/>
            <person name="Hsuan V.W."/>
            <person name="Iida K."/>
            <person name="Karnes M."/>
            <person name="Khan S."/>
            <person name="Koesema E."/>
            <person name="Ishida J."/>
            <person name="Jiang P.X."/>
            <person name="Jones T."/>
            <person name="Kawai J."/>
            <person name="Kamiya A."/>
            <person name="Meyers C."/>
            <person name="Nakajima M."/>
            <person name="Narusaka M."/>
            <person name="Seki M."/>
            <person name="Sakurai T."/>
            <person name="Satou M."/>
            <person name="Tamse R."/>
            <person name="Vaysberg M."/>
            <person name="Wallender E.K."/>
            <person name="Wong C."/>
            <person name="Yamamura Y."/>
            <person name="Yuan S."/>
            <person name="Shinozaki K."/>
            <person name="Davis R.W."/>
            <person name="Theologis A."/>
            <person name="Ecker J.R."/>
        </authorList>
    </citation>
    <scope>NUCLEOTIDE SEQUENCE [LARGE SCALE MRNA] (ISOFORM 1)</scope>
    <source>
        <strain>cv. Columbia</strain>
    </source>
</reference>
<reference key="6">
    <citation type="journal article" date="2009" name="DNA Res.">
        <title>Analysis of multiple occurrences of alternative splicing events in Arabidopsis thaliana using novel sequenced full-length cDNAs.</title>
        <authorList>
            <person name="Iida K."/>
            <person name="Fukami-Kobayashi K."/>
            <person name="Toyoda A."/>
            <person name="Sakaki Y."/>
            <person name="Kobayashi M."/>
            <person name="Seki M."/>
            <person name="Shinozaki K."/>
        </authorList>
    </citation>
    <scope>NUCLEOTIDE SEQUENCE [MRNA] (ISOFORM 2)</scope>
    <source>
        <tissue>Rosette leaf</tissue>
    </source>
</reference>
<reference key="7">
    <citation type="journal article" date="2001" name="EMBO J.">
        <title>Direct interaction between the Arabidopsis disease resistance signaling proteins, EDS1 and PAD4.</title>
        <authorList>
            <person name="Feys B.J."/>
            <person name="Moisan L.J."/>
            <person name="Newman M.-A."/>
            <person name="Parker J.E."/>
        </authorList>
    </citation>
    <scope>FUNCTION</scope>
    <scope>INTERACTION WITH PAD4</scope>
    <scope>SUBUNIT</scope>
    <scope>MUTAGENESIS OF GLU-466</scope>
</reference>
<reference key="8">
    <citation type="journal article" date="2005" name="Plant Cell">
        <title>Arabidopsis SENESCENCE-ASSOCIATED GENE101 stabilizes and signals within an ENHANCED DISEASE SUSCEPTIBILITY1 complex in plant innate immunity.</title>
        <authorList>
            <person name="Feys B.J."/>
            <person name="Wiermer M."/>
            <person name="Bhat R.A."/>
            <person name="Moisan L.J."/>
            <person name="Medina-Escobar N."/>
            <person name="Neu C."/>
            <person name="Cabral A."/>
            <person name="Parker J.E."/>
        </authorList>
    </citation>
    <scope>INTERACTION WITH SAG101 AND PAD4</scope>
    <scope>SUBCELLULAR LOCATION</scope>
</reference>
<reference key="9">
    <citation type="journal article" date="2009" name="PLoS Genet.">
        <title>Enhanced disease susceptibility 1 and salicylic acid act redundantly to regulate resistance gene-mediated signaling.</title>
        <authorList>
            <person name="Venugopal S.C."/>
            <person name="Jeong R.D."/>
            <person name="Mandal M.K."/>
            <person name="Zhu S."/>
            <person name="Chandra-Shekara A.C."/>
            <person name="Xia Y."/>
            <person name="Hersh M."/>
            <person name="Stromberg A.J."/>
            <person name="Navarre D."/>
            <person name="Kachroo A."/>
            <person name="Kachroo P."/>
        </authorList>
    </citation>
    <scope>FUNCTION</scope>
</reference>
<reference key="10">
    <citation type="journal article" date="2010" name="PLoS Pathog.">
        <title>Balanced nuclear and cytoplasmic activities of EDS1 are required for a complete plant innate immune response.</title>
        <authorList>
            <person name="Garcia A.V."/>
            <person name="Blanvillain-Baufume S."/>
            <person name="Huibers R.P."/>
            <person name="Wiermer M."/>
            <person name="Li G."/>
            <person name="Gobbato E."/>
            <person name="Rietz S."/>
            <person name="Parker J.E."/>
        </authorList>
    </citation>
    <scope>FUNCTION</scope>
</reference>
<reference key="11">
    <citation type="journal article" date="2011" name="New Phytol.">
        <title>Different roles of Enhanced Disease Susceptibility1 (EDS1) bound to and dissociated from Phytoalexin Deficient4 (PAD4) in Arabidopsis immunity.</title>
        <authorList>
            <person name="Rietz S."/>
            <person name="Stamm A."/>
            <person name="Malonek S."/>
            <person name="Wagner S."/>
            <person name="Becker D."/>
            <person name="Medina-Escobar N."/>
            <person name="Vlot A.C."/>
            <person name="Feys B.J."/>
            <person name="Niefind K."/>
            <person name="Parker J.E."/>
        </authorList>
    </citation>
    <scope>FUNCTION</scope>
    <scope>INTERACTION WITH PAD4 AND SAG101</scope>
    <scope>MUTAGENESIS OF LEU-262 AND GLU-466</scope>
    <scope>SUBUNIT</scope>
    <source>
        <strain>cv. Columbia</strain>
        <strain>cv. Wassilewskija</strain>
    </source>
</reference>
<reference key="12">
    <citation type="journal article" date="2011" name="PLoS Pathog.">
        <title>SAG101 forms a ternary complex with EDS1 and PAD4 and is required for resistance signaling against turnip crinkle virus.</title>
        <authorList>
            <person name="Zhu S."/>
            <person name="Jeong R.-D."/>
            <person name="Venugopal S.C."/>
            <person name="Lapchyk L."/>
            <person name="Navarre D."/>
            <person name="Kachroo A."/>
            <person name="Kachroo P."/>
        </authorList>
    </citation>
    <scope>FUNCTION</scope>
    <scope>DISRUPTION PHENOTYPE</scope>
    <scope>INDUCTION BY SALICYLIC ACID AND VIRUS INFECTION</scope>
    <scope>SUBUNIT</scope>
    <scope>SUBCELLULAR LOCATION</scope>
    <source>
        <strain>cv. Wassilewskija</strain>
    </source>
</reference>
<reference key="13">
    <citation type="journal article" date="2011" name="Science">
        <title>Arabidopsis EDS1 connects pathogen effector recognition to cell compartment-specific immune responses.</title>
        <authorList>
            <person name="Heidrich K."/>
            <person name="Wirthmueller L."/>
            <person name="Tasset C."/>
            <person name="Pouzet C."/>
            <person name="Deslandes L."/>
            <person name="Parker J.E."/>
        </authorList>
    </citation>
    <scope>INTERACTION WITH AVRRPS4 AND RPS4</scope>
    <scope>SUBCELLULAR LOCATION</scope>
</reference>
<reference key="14">
    <citation type="journal article" date="2011" name="Science">
        <title>Pathogen effectors target Arabidopsis EDS1 and alter its interactions with immune regulators.</title>
        <authorList>
            <person name="Bhattacharjee S."/>
            <person name="Halane M.K."/>
            <person name="Kim S.H."/>
            <person name="Gassmann W."/>
        </authorList>
    </citation>
    <scope>FUNCTION</scope>
    <scope>INTERACTION WITH RPS4; RPS6; SNC1; SRFR1; AVRRPS4 AND HOPA1</scope>
    <scope>SUBUNIT</scope>
    <scope>SUBCELLULAR LOCATION</scope>
</reference>
<reference key="15">
    <citation type="journal article" date="2012" name="Mol. Cell. Proteomics">
        <title>Comparative large-scale characterisation of plant vs. mammal proteins reveals similar and idiosyncratic N-alpha acetylation features.</title>
        <authorList>
            <person name="Bienvenut W.V."/>
            <person name="Sumpton D."/>
            <person name="Martinez A."/>
            <person name="Lilla S."/>
            <person name="Espagne C."/>
            <person name="Meinnel T."/>
            <person name="Giglione C."/>
        </authorList>
    </citation>
    <scope>ACETYLATION [LARGE SCALE ANALYSIS] AT ALA-2</scope>
    <scope>CLEAVAGE OF INITIATOR METHIONINE [LARGE SCALE ANALYSIS]</scope>
    <scope>IDENTIFICATION BY MASS SPECTROMETRY [LARGE SCALE ANALYSIS]</scope>
</reference>
<reference key="16">
    <citation type="journal article" date="2012" name="Mol. Plant Microbe Interact.">
        <title>EDS1 contributes to nonhost resistance of Arabidopsis thaliana against Erwinia amylovora.</title>
        <authorList>
            <person name="Moreau M."/>
            <person name="Degrave A."/>
            <person name="Vedel R."/>
            <person name="Bitton F."/>
            <person name="Patrit O."/>
            <person name="Renou J.-P."/>
            <person name="Barny M.-A."/>
            <person name="Fagard M."/>
        </authorList>
    </citation>
    <scope>FUNCTION</scope>
    <source>
        <strain>cv. Columbia</strain>
        <strain>cv. Landsberg erecta</strain>
    </source>
</reference>
<reference key="17">
    <citation type="journal article" date="2012" name="Plant Cell">
        <title>Natural variation in small molecule-induced TIR-NB-LRR signaling induces root growth arrest via EDS1- and PAD4-complexed R protein VICTR in Arabidopsis.</title>
        <authorList>
            <person name="Kim T.H."/>
            <person name="Kunz H.H."/>
            <person name="Bhattacharjee S."/>
            <person name="Hauser F."/>
            <person name="Park J."/>
            <person name="Engineer C."/>
            <person name="Liu A."/>
            <person name="Ha T."/>
            <person name="Parker J.E."/>
            <person name="Gassmann W."/>
            <person name="Schroeder J.I."/>
        </authorList>
    </citation>
    <scope>INTERACTION WITH VICTR</scope>
</reference>
<reference key="18">
    <citation type="journal article" date="2013" name="Cell Host Microbe">
        <title>Structural basis for signaling by exclusive EDS1 heteromeric complexes with SAG101 or PAD4 in plant innate immunity.</title>
        <authorList>
            <person name="Wagner S."/>
            <person name="Stuttmann J."/>
            <person name="Rietz S."/>
            <person name="Guerois R."/>
            <person name="Brunstein E."/>
            <person name="Bautor J."/>
            <person name="Niefind K."/>
            <person name="Parker J.E."/>
        </authorList>
    </citation>
    <scope>FUNCTION</scope>
</reference>
<reference key="19">
    <citation type="journal article" date="2014" name="Plant Physiol.">
        <title>Contrasting roles of the apoplastic aspartyl protease APOPLASTIC, ENHANCED DISEASE SUSCEPTIBILITY1-DEPENDENT1 and LEGUME LECTIN-LIKE PROTEIN1 in Arabidopsis systemic acquired resistance.</title>
        <authorList>
            <person name="Breitenbach H.H."/>
            <person name="Wenig M."/>
            <person name="Wittek F."/>
            <person name="Jorda L."/>
            <person name="Maldonado-Alconada A.M."/>
            <person name="Sarioglu H."/>
            <person name="Colby T."/>
            <person name="Knappe C."/>
            <person name="Bichlmeier M."/>
            <person name="Pabst E."/>
            <person name="Mackey D."/>
            <person name="Parker J.E."/>
            <person name="Vlot A.C."/>
        </authorList>
    </citation>
    <scope>FUNCTION</scope>
</reference>
<protein>
    <recommendedName>
        <fullName evidence="19">Protein EDS1</fullName>
    </recommendedName>
    <alternativeName>
        <fullName evidence="16">Enhanced disease susceptibility 1</fullName>
    </alternativeName>
</protein>
<gene>
    <name evidence="16" type="primary">EDS1</name>
    <name evidence="18" type="synonym">EDS1-90</name>
    <name evidence="17" type="synonym">EDS1A</name>
    <name evidence="21" type="ordered locus">At3g48090</name>
    <name evidence="22" type="ORF">T17F15.40</name>
</gene>
<sequence>MAFEALTGINGDLITRSWSASKQAYLTERYHKEEAGAVVIFAFQPSFSEKDFFDPDNKSSFGEIKLNRVQFPCMRKIGKGDVATVNEAFLKNLEAIIDPRTSFQASVEMAVRSRKQIVFTGHSSGGATAILATVWYLEKYFIRNPNVYLEPRCVTFGAPLVGDSIFSHALGREKWSRFFVNFVSRFDIVPRIMLARKASVEETLPHVLAQLDPRKSSVQESEQRITEFYTRVMRDTSTVANQAVCELTGSAEAFLETLSSFLELSPYRPAGTFVFSTEKRLVAVNNSDAILQMLFYTSQASDEQEWSLIPFRSIRDHHSYEELVQSMGKKLFNHLDGENSIESTLNDLGVSTRGRQYVQAALEEEKKRVENQKKIIQVIEQERFLKKLAWIEDEYKPKCQAHKNGYYDSFKVSNEENDFKANVKRAELAGVFDEVLGLMKKCQLPDEFEGDIDWIKLATRYRRLVEPLDIANYHRHLKNEDTGPYMKRGRPTRYIYAQRGYEHYILKPNGMIAEDVFWNKVNGLNLGLQLEEIQETLKNSGSECGSCFWAEVEELKGKPYEEVEVRVKTLEGMLGEWITDGEVDDKEIFLEGSTFRKWWITLPKNHKSHSPLRDYMMDEITDT</sequence>
<keyword id="KW-0002">3D-structure</keyword>
<keyword id="KW-0007">Acetylation</keyword>
<keyword id="KW-0025">Alternative splicing</keyword>
<keyword id="KW-0175">Coiled coil</keyword>
<keyword id="KW-0963">Cytoplasm</keyword>
<keyword id="KW-0256">Endoplasmic reticulum</keyword>
<keyword id="KW-0378">Hydrolase</keyword>
<keyword id="KW-0492">Microsome</keyword>
<keyword id="KW-0539">Nucleus</keyword>
<keyword id="KW-0611">Plant defense</keyword>
<keyword id="KW-1185">Reference proteome</keyword>
<name>EDS1C_ARATH</name>
<comment type="function">
    <text evidence="3 4 6 7 8 11 12 15 20">Positive regulator of basal resistance and of effector-triggered immunity specifically mediated by TIR-NB-LRR (TNL) resistance proteins. Disruption by bacterial effector of EDS1-TIR-NB-LRR resistance protein interactions constitutes the first step in resistance activation (PubMed:22158819). Acts redundantly with salicylic acid to regulate resistance gene-mediated signaling (PubMed:19578402). Triggers early plant defenses and hypersensitive response independently of PAD4, and then recruits PAD4 to potentiate plant defenses through the accumulation of salicylic acid (PubMed:11574472). Nuclear localization is essential for basal and TNL-conditioned immunity and for reprogramming defense gene expression, while cytoplasmic EDS1 is required to induce a complete immune response (PubMed:20617163). Heterodimerization with PAD4 and/or SGA101 is necessary for TNL-mediated effector-triggered immunity (PubMed:24331460). Contributes to nonhost resistance against E.amylovora (PubMed:22316300). Loss of EDS1-PAD4 interaction compromises basal but not TNL-triggered resistance (PubMed:21434927). Necessary for systemic acquired resistance (SAR) signal generation and perception (PubMed:24755512). Has no direct lipase activity (PubMed:16040633). Putative lipase activity is dispensable for immune functions (PubMed:24331460).</text>
</comment>
<comment type="subunit">
    <text evidence="4 5 8 9 11 13 14">Homodimer (PubMed:11574472, PubMed:22158819). Interacts with RPS4, RPS6, SNC1, SRFR1, AvrRps4 and HopA1 (PubMed:22158818, PubMed:22158819). Part of a nuclear complex made of EDS1, PAD4 and SAG101, that can be redirected to the cytoplasm in the presence of an extranuclear form of EDS1 (PubMed:22072959). Interacts (via N-terminus) with PAD4 (via N-terminus) (PubMed:11574472, PubMed:21434927, PubMed:22072959). Interacts (via N-terminus) with SAG101 (PubMed:16040633, PubMed:21434927, PubMed:22072959). EDS1-SAG101 and EDS1-PAD4 form separate complexes in pathogen-unchallenged cells (PubMed:16040633, PubMed:21434927). Part of a nuclear protein complex made of VICTR, PAD4 and EDS1 (PubMed:23275581). Interacts with VICTR (PubMed:23275581).</text>
</comment>
<comment type="interaction">
    <interactant intactId="EBI-1390454">
        <id>Q9SU72</id>
    </interactant>
    <interactant intactId="EBI-1153797">
        <id>Q94KL5</id>
        <label>BLH4</label>
    </interactant>
    <organismsDiffer>false</organismsDiffer>
    <experiments>3</experiments>
</comment>
<comment type="interaction">
    <interactant intactId="EBI-1390454">
        <id>Q9SU72</id>
    </interactant>
    <interactant intactId="EBI-4428728">
        <id>Q05466</id>
        <label>HAT4</label>
    </interactant>
    <organismsDiffer>false</organismsDiffer>
    <experiments>3</experiments>
</comment>
<comment type="interaction">
    <interactant intactId="EBI-1390454">
        <id>Q9SU72</id>
    </interactant>
    <interactant intactId="EBI-2012188">
        <id>Q8RXD6</id>
        <label>HUB1</label>
    </interactant>
    <organismsDiffer>false</organismsDiffer>
    <experiments>4</experiments>
</comment>
<comment type="interaction">
    <interactant intactId="EBI-1390454">
        <id>Q9SU72</id>
    </interactant>
    <interactant intactId="EBI-1390441">
        <id>Q9S745</id>
        <label>PAD4</label>
    </interactant>
    <organismsDiffer>false</organismsDiffer>
    <experiments>8</experiments>
</comment>
<comment type="interaction">
    <interactant intactId="EBI-1390454">
        <id>Q9SU72</id>
    </interactant>
    <interactant intactId="EBI-1645478">
        <id>Q38845</id>
        <label>PP2AA1</label>
    </interactant>
    <organismsDiffer>false</organismsDiffer>
    <experiments>3</experiments>
</comment>
<comment type="interaction">
    <interactant intactId="EBI-1390454">
        <id>Q9SU72</id>
    </interactant>
    <interactant intactId="EBI-4424877">
        <id>Q9S7W5</id>
        <label>TCP13</label>
    </interactant>
    <organismsDiffer>false</organismsDiffer>
    <experiments>3</experiments>
</comment>
<comment type="interaction">
    <interactant intactId="EBI-1390454">
        <id>Q9SU72</id>
    </interactant>
    <interactant intactId="EBI-4426144">
        <id>Q9C9L2</id>
        <label>TCP15</label>
    </interactant>
    <organismsDiffer>false</organismsDiffer>
    <experiments>3</experiments>
</comment>
<comment type="subcellular location">
    <subcellularLocation>
        <location evidence="5 9 11">Nucleus</location>
    </subcellularLocation>
    <subcellularLocation>
        <location evidence="5 9 10 11">Cytoplasm</location>
    </subcellularLocation>
    <subcellularLocation>
        <location evidence="11">Microsome</location>
    </subcellularLocation>
    <text evidence="5 9 11 13">Found in both the nucleus and diffuse in the cytosol when associated with PAD4, in the nucleus and in punctate spots in the cytoplasm when interacting with SRFR1, SNC1 or RPS4, only in the nucleus when associated with SAG101 and in the cytosol when it dimerizes. Found in the nucleus when interacting with VICTR and PAD4. Interacts with AvrRps4 and HopA1 effectors in microsomes.</text>
</comment>
<comment type="alternative products">
    <event type="alternative splicing"/>
    <isoform>
        <id>Q9SU72-1</id>
        <name>1</name>
        <sequence type="displayed"/>
    </isoform>
    <isoform>
        <id>Q9SU72-2</id>
        <name>2</name>
        <sequence type="described" ref="VSP_057262"/>
    </isoform>
</comment>
<comment type="induction">
    <text evidence="3 9">Up-regulated by salicylic acid or upon turnip crinkle virus or avirulent bacterial pathogen infection.</text>
</comment>
<comment type="disruption phenotype">
    <text evidence="9">No effect on RPS4-mediated resistance against avrRps4 bacteria, due to the redundancy with EDS1B.</text>
</comment>
<accession>Q9SU72</accession>
<accession>B9DFM5</accession>
<dbReference type="EMBL" id="EF470650">
    <property type="protein sequence ID" value="ABR45989.1"/>
    <property type="molecule type" value="Genomic_DNA"/>
</dbReference>
<dbReference type="EMBL" id="EF470654">
    <property type="protein sequence ID" value="ABR45993.1"/>
    <property type="molecule type" value="Genomic_DNA"/>
</dbReference>
<dbReference type="EMBL" id="EF470663">
    <property type="protein sequence ID" value="ABR46002.1"/>
    <property type="molecule type" value="Genomic_DNA"/>
</dbReference>
<dbReference type="EMBL" id="AL049658">
    <property type="protein sequence ID" value="CAB41130.1"/>
    <property type="molecule type" value="Genomic_DNA"/>
</dbReference>
<dbReference type="EMBL" id="CP002686">
    <property type="protein sequence ID" value="AEE78366.1"/>
    <property type="molecule type" value="Genomic_DNA"/>
</dbReference>
<dbReference type="EMBL" id="CP002686">
    <property type="protein sequence ID" value="AEE78367.1"/>
    <property type="molecule type" value="Genomic_DNA"/>
</dbReference>
<dbReference type="EMBL" id="AY046025">
    <property type="protein sequence ID" value="AAK76699.1"/>
    <property type="molecule type" value="mRNA"/>
</dbReference>
<dbReference type="EMBL" id="AY150423">
    <property type="protein sequence ID" value="AAN12884.1"/>
    <property type="molecule type" value="mRNA"/>
</dbReference>
<dbReference type="EMBL" id="AK316830">
    <property type="protein sequence ID" value="BAH19542.1"/>
    <property type="molecule type" value="mRNA"/>
</dbReference>
<dbReference type="PIR" id="T06674">
    <property type="entry name" value="T06674"/>
</dbReference>
<dbReference type="RefSeq" id="NP_001030829.1">
    <molecule id="Q9SU72-2"/>
    <property type="nucleotide sequence ID" value="NM_001035752.1"/>
</dbReference>
<dbReference type="RefSeq" id="NP_190392.1">
    <molecule id="Q9SU72-1"/>
    <property type="nucleotide sequence ID" value="NM_114678.4"/>
</dbReference>
<dbReference type="PDB" id="7XDD">
    <property type="method" value="EM"/>
    <property type="resolution" value="2.93 A"/>
    <property type="chains" value="B=1-623"/>
</dbReference>
<dbReference type="PDB" id="7XEY">
    <property type="method" value="X-ray"/>
    <property type="resolution" value="2.29 A"/>
    <property type="chains" value="A=1-623"/>
</dbReference>
<dbReference type="PDB" id="7XJP">
    <property type="method" value="EM"/>
    <property type="resolution" value="2.71 A"/>
    <property type="chains" value="A=1-623"/>
</dbReference>
<dbReference type="PDB" id="8YL6">
    <property type="method" value="EM"/>
    <property type="resolution" value="3.10 A"/>
    <property type="chains" value="A=1-623"/>
</dbReference>
<dbReference type="PDB" id="8YL7">
    <property type="method" value="EM"/>
    <property type="resolution" value="3.10 A"/>
    <property type="chains" value="A=1-623"/>
</dbReference>
<dbReference type="PDB" id="8YN0">
    <property type="method" value="X-ray"/>
    <property type="resolution" value="2.49 A"/>
    <property type="chains" value="A/B=2-618"/>
</dbReference>
<dbReference type="PDB" id="8YN1">
    <property type="method" value="EM"/>
    <property type="resolution" value="3.09 A"/>
    <property type="chains" value="A=2-615"/>
</dbReference>
<dbReference type="PDB" id="8ZW9">
    <property type="method" value="EM"/>
    <property type="resolution" value="3.03 A"/>
    <property type="chains" value="B=1-623"/>
</dbReference>
<dbReference type="PDB" id="8ZWA">
    <property type="method" value="EM"/>
    <property type="resolution" value="3.48 A"/>
    <property type="chains" value="B=1-623"/>
</dbReference>
<dbReference type="PDBsum" id="7XDD"/>
<dbReference type="PDBsum" id="7XEY"/>
<dbReference type="PDBsum" id="7XJP"/>
<dbReference type="PDBsum" id="8YL6"/>
<dbReference type="PDBsum" id="8YL7"/>
<dbReference type="PDBsum" id="8YN0"/>
<dbReference type="PDBsum" id="8YN1"/>
<dbReference type="PDBsum" id="8ZW9"/>
<dbReference type="PDBsum" id="8ZWA"/>
<dbReference type="EMDB" id="EMD-33144"/>
<dbReference type="EMDB" id="EMD-33233"/>
<dbReference type="EMDB" id="EMD-39383"/>
<dbReference type="EMDB" id="EMD-39384"/>
<dbReference type="EMDB" id="EMD-39411"/>
<dbReference type="EMDB" id="EMD-60520"/>
<dbReference type="EMDB" id="EMD-60521"/>
<dbReference type="SASBDB" id="Q9SU72"/>
<dbReference type="SMR" id="Q9SU72"/>
<dbReference type="ComplexPortal" id="CPX-1321">
    <property type="entry name" value="EDS1-SAG101 complex, variant EDS1"/>
</dbReference>
<dbReference type="ComplexPortal" id="CPX-1324">
    <property type="entry name" value="EDS1-PAD4 complex, variant EDS1"/>
</dbReference>
<dbReference type="ComplexPortal" id="CPX-1325">
    <property type="entry name" value="EDS1-PAD4-SAG101 complex, variant EDS1"/>
</dbReference>
<dbReference type="FunCoup" id="Q9SU72">
    <property type="interactions" value="686"/>
</dbReference>
<dbReference type="IntAct" id="Q9SU72">
    <property type="interactions" value="9"/>
</dbReference>
<dbReference type="STRING" id="3702.Q9SU72"/>
<dbReference type="ESTHER" id="arath-eds1">
    <property type="family name" value="Plant_lipase_EDS1-like"/>
</dbReference>
<dbReference type="iPTMnet" id="Q9SU72"/>
<dbReference type="PaxDb" id="3702-AT3G48090.1"/>
<dbReference type="ProteomicsDB" id="222074">
    <molecule id="Q9SU72-1"/>
</dbReference>
<dbReference type="DNASU" id="823964"/>
<dbReference type="EnsemblPlants" id="AT3G48090.1">
    <molecule id="Q9SU72-1"/>
    <property type="protein sequence ID" value="AT3G48090.1"/>
    <property type="gene ID" value="AT3G48090"/>
</dbReference>
<dbReference type="EnsemblPlants" id="AT3G48090.2">
    <molecule id="Q9SU72-2"/>
    <property type="protein sequence ID" value="AT3G48090.2"/>
    <property type="gene ID" value="AT3G48090"/>
</dbReference>
<dbReference type="GeneID" id="823964"/>
<dbReference type="Gramene" id="AT3G48090.1">
    <molecule id="Q9SU72-1"/>
    <property type="protein sequence ID" value="AT3G48090.1"/>
    <property type="gene ID" value="AT3G48090"/>
</dbReference>
<dbReference type="Gramene" id="AT3G48090.2">
    <molecule id="Q9SU72-2"/>
    <property type="protein sequence ID" value="AT3G48090.2"/>
    <property type="gene ID" value="AT3G48090"/>
</dbReference>
<dbReference type="KEGG" id="ath:AT3G48090"/>
<dbReference type="Araport" id="AT3G48090"/>
<dbReference type="TAIR" id="AT3G48090">
    <property type="gene designation" value="EDS1"/>
</dbReference>
<dbReference type="eggNOG" id="ENOG502QR4E">
    <property type="taxonomic scope" value="Eukaryota"/>
</dbReference>
<dbReference type="HOGENOM" id="CLU_016367_1_0_1"/>
<dbReference type="InParanoid" id="Q9SU72"/>
<dbReference type="OMA" id="ESCFWAV"/>
<dbReference type="PhylomeDB" id="Q9SU72"/>
<dbReference type="PRO" id="PR:Q9SU72"/>
<dbReference type="Proteomes" id="UP000006548">
    <property type="component" value="Chromosome 3"/>
</dbReference>
<dbReference type="ExpressionAtlas" id="Q9SU72">
    <property type="expression patterns" value="baseline and differential"/>
</dbReference>
<dbReference type="GO" id="GO:0009507">
    <property type="term" value="C:chloroplast"/>
    <property type="evidence" value="ECO:0000314"/>
    <property type="project" value="TAIR"/>
</dbReference>
<dbReference type="GO" id="GO:0005737">
    <property type="term" value="C:cytoplasm"/>
    <property type="evidence" value="ECO:0000314"/>
    <property type="project" value="UniProtKB"/>
</dbReference>
<dbReference type="GO" id="GO:0005829">
    <property type="term" value="C:cytosol"/>
    <property type="evidence" value="ECO:0000314"/>
    <property type="project" value="ComplexPortal"/>
</dbReference>
<dbReference type="GO" id="GO:0106093">
    <property type="term" value="C:EDS1 disease-resistance complex"/>
    <property type="evidence" value="ECO:0000314"/>
    <property type="project" value="ComplexPortal"/>
</dbReference>
<dbReference type="GO" id="GO:0005783">
    <property type="term" value="C:endoplasmic reticulum"/>
    <property type="evidence" value="ECO:0007669"/>
    <property type="project" value="UniProtKB-KW"/>
</dbReference>
<dbReference type="GO" id="GO:0005634">
    <property type="term" value="C:nucleus"/>
    <property type="evidence" value="ECO:0000314"/>
    <property type="project" value="UniProtKB"/>
</dbReference>
<dbReference type="GO" id="GO:0016298">
    <property type="term" value="F:lipase activity"/>
    <property type="evidence" value="ECO:0000250"/>
    <property type="project" value="TAIR"/>
</dbReference>
<dbReference type="GO" id="GO:0042803">
    <property type="term" value="F:protein homodimerization activity"/>
    <property type="evidence" value="ECO:0000314"/>
    <property type="project" value="UniProtKB"/>
</dbReference>
<dbReference type="GO" id="GO:0010618">
    <property type="term" value="P:aerenchyma formation"/>
    <property type="evidence" value="ECO:0000315"/>
    <property type="project" value="TAIR"/>
</dbReference>
<dbReference type="GO" id="GO:0050829">
    <property type="term" value="P:defense response to Gram-negative bacterium"/>
    <property type="evidence" value="ECO:0000315"/>
    <property type="project" value="TAIR"/>
</dbReference>
<dbReference type="GO" id="GO:0060866">
    <property type="term" value="P:leaf abscission"/>
    <property type="evidence" value="ECO:0000315"/>
    <property type="project" value="TAIR"/>
</dbReference>
<dbReference type="GO" id="GO:0006629">
    <property type="term" value="P:lipid metabolic process"/>
    <property type="evidence" value="ECO:0007669"/>
    <property type="project" value="InterPro"/>
</dbReference>
<dbReference type="GO" id="GO:0009626">
    <property type="term" value="P:plant-type hypersensitive response"/>
    <property type="evidence" value="ECO:0000315"/>
    <property type="project" value="UniProtKB"/>
</dbReference>
<dbReference type="GO" id="GO:0010310">
    <property type="term" value="P:regulation of hydrogen peroxide metabolic process"/>
    <property type="evidence" value="ECO:0000315"/>
    <property type="project" value="TAIR"/>
</dbReference>
<dbReference type="GO" id="GO:0001666">
    <property type="term" value="P:response to hypoxia"/>
    <property type="evidence" value="ECO:0000315"/>
    <property type="project" value="TAIR"/>
</dbReference>
<dbReference type="GO" id="GO:0000304">
    <property type="term" value="P:response to singlet oxygen"/>
    <property type="evidence" value="ECO:0000316"/>
    <property type="project" value="TAIR"/>
</dbReference>
<dbReference type="GO" id="GO:0009627">
    <property type="term" value="P:systemic acquired resistance"/>
    <property type="evidence" value="ECO:0000270"/>
    <property type="project" value="TAIR"/>
</dbReference>
<dbReference type="GO" id="GO:0009862">
    <property type="term" value="P:systemic acquired resistance, salicylic acid mediated signaling pathway"/>
    <property type="evidence" value="ECO:0000315"/>
    <property type="project" value="ComplexPortal"/>
</dbReference>
<dbReference type="Gene3D" id="3.40.50.1820">
    <property type="entry name" value="alpha/beta hydrolase"/>
    <property type="match status" value="1"/>
</dbReference>
<dbReference type="InterPro" id="IPR029058">
    <property type="entry name" value="AB_hydrolase_fold"/>
</dbReference>
<dbReference type="InterPro" id="IPR044214">
    <property type="entry name" value="EDS1-like"/>
</dbReference>
<dbReference type="InterPro" id="IPR041266">
    <property type="entry name" value="EDS1_EP"/>
</dbReference>
<dbReference type="InterPro" id="IPR002921">
    <property type="entry name" value="Fungal_lipase-type"/>
</dbReference>
<dbReference type="PANTHER" id="PTHR47090">
    <property type="entry name" value="PROTEIN EDS1-RELATED"/>
    <property type="match status" value="1"/>
</dbReference>
<dbReference type="PANTHER" id="PTHR47090:SF2">
    <property type="entry name" value="PROTEIN EDS1-RELATED"/>
    <property type="match status" value="1"/>
</dbReference>
<dbReference type="Pfam" id="PF18117">
    <property type="entry name" value="EDS1_EP"/>
    <property type="match status" value="1"/>
</dbReference>
<dbReference type="Pfam" id="PF01764">
    <property type="entry name" value="Lipase_3"/>
    <property type="match status" value="1"/>
</dbReference>
<dbReference type="SUPFAM" id="SSF53474">
    <property type="entry name" value="alpha/beta-Hydrolases"/>
    <property type="match status" value="1"/>
</dbReference>
<dbReference type="PROSITE" id="PS00120">
    <property type="entry name" value="LIPASE_SER"/>
    <property type="match status" value="1"/>
</dbReference>
<proteinExistence type="evidence at protein level"/>
<evidence type="ECO:0000250" key="1">
    <source>
        <dbReference type="UniProtKB" id="P19515"/>
    </source>
</evidence>
<evidence type="ECO:0000255" key="2"/>
<evidence type="ECO:0000269" key="3">
    <source>
    </source>
</evidence>
<evidence type="ECO:0000269" key="4">
    <source>
    </source>
</evidence>
<evidence type="ECO:0000269" key="5">
    <source>
    </source>
</evidence>
<evidence type="ECO:0000269" key="6">
    <source>
    </source>
</evidence>
<evidence type="ECO:0000269" key="7">
    <source>
    </source>
</evidence>
<evidence type="ECO:0000269" key="8">
    <source>
    </source>
</evidence>
<evidence type="ECO:0000269" key="9">
    <source>
    </source>
</evidence>
<evidence type="ECO:0000269" key="10">
    <source>
    </source>
</evidence>
<evidence type="ECO:0000269" key="11">
    <source>
    </source>
</evidence>
<evidence type="ECO:0000269" key="12">
    <source>
    </source>
</evidence>
<evidence type="ECO:0000269" key="13">
    <source>
    </source>
</evidence>
<evidence type="ECO:0000269" key="14">
    <source>
    </source>
</evidence>
<evidence type="ECO:0000269" key="15">
    <source>
    </source>
</evidence>
<evidence type="ECO:0000303" key="16">
    <source>
    </source>
</evidence>
<evidence type="ECO:0000303" key="17">
    <source>
    </source>
</evidence>
<evidence type="ECO:0000303" key="18">
    <source>
    </source>
</evidence>
<evidence type="ECO:0000305" key="19"/>
<evidence type="ECO:0000305" key="20">
    <source>
    </source>
</evidence>
<evidence type="ECO:0000312" key="21">
    <source>
        <dbReference type="Araport" id="AT3G48090"/>
    </source>
</evidence>
<evidence type="ECO:0000312" key="22">
    <source>
        <dbReference type="EMBL" id="CAB41130.1"/>
    </source>
</evidence>
<evidence type="ECO:0000312" key="23">
    <source>
        <dbReference type="Proteomes" id="UP000006548"/>
    </source>
</evidence>
<evidence type="ECO:0007744" key="24">
    <source>
    </source>
</evidence>
<evidence type="ECO:0007829" key="25">
    <source>
        <dbReference type="PDB" id="7XEY"/>
    </source>
</evidence>
<evidence type="ECO:0007829" key="26">
    <source>
        <dbReference type="PDB" id="7XJP"/>
    </source>
</evidence>
<evidence type="ECO:0007829" key="27">
    <source>
        <dbReference type="PDB" id="8ZWA"/>
    </source>
</evidence>